<proteinExistence type="inferred from homology"/>
<keyword id="KW-0067">ATP-binding</keyword>
<keyword id="KW-0119">Carbohydrate metabolism</keyword>
<keyword id="KW-0418">Kinase</keyword>
<keyword id="KW-0511">Multifunctional enzyme</keyword>
<keyword id="KW-0547">Nucleotide-binding</keyword>
<keyword id="KW-0548">Nucleotidyltransferase</keyword>
<keyword id="KW-0808">Transferase</keyword>
<protein>
    <recommendedName>
        <fullName evidence="1">Bifunctional protein HldE</fullName>
    </recommendedName>
    <domain>
        <recommendedName>
            <fullName evidence="1">D-beta-D-heptose 7-phosphate kinase</fullName>
            <ecNumber evidence="1">2.7.1.167</ecNumber>
        </recommendedName>
        <alternativeName>
            <fullName evidence="1">D-beta-D-heptose 7-phosphotransferase</fullName>
        </alternativeName>
        <alternativeName>
            <fullName evidence="1">D-glycero-beta-D-manno-heptose-7-phosphate kinase</fullName>
        </alternativeName>
    </domain>
    <domain>
        <recommendedName>
            <fullName evidence="1">D-beta-D-heptose 1-phosphate adenylyltransferase</fullName>
            <ecNumber evidence="1">2.7.7.70</ecNumber>
        </recommendedName>
        <alternativeName>
            <fullName evidence="1">D-glycero-beta-D-manno-heptose 1-phosphate adenylyltransferase</fullName>
        </alternativeName>
    </domain>
</protein>
<reference key="1">
    <citation type="submission" date="2008-01" db="EMBL/GenBank/DDBJ databases">
        <title>Complete sequence of Pseudomonas putida GB-1.</title>
        <authorList>
            <consortium name="US DOE Joint Genome Institute"/>
            <person name="Copeland A."/>
            <person name="Lucas S."/>
            <person name="Lapidus A."/>
            <person name="Barry K."/>
            <person name="Glavina del Rio T."/>
            <person name="Dalin E."/>
            <person name="Tice H."/>
            <person name="Pitluck S."/>
            <person name="Bruce D."/>
            <person name="Goodwin L."/>
            <person name="Chertkov O."/>
            <person name="Brettin T."/>
            <person name="Detter J.C."/>
            <person name="Han C."/>
            <person name="Kuske C.R."/>
            <person name="Schmutz J."/>
            <person name="Larimer F."/>
            <person name="Land M."/>
            <person name="Hauser L."/>
            <person name="Kyrpides N."/>
            <person name="Kim E."/>
            <person name="McCarthy J.K."/>
            <person name="Richardson P."/>
        </authorList>
    </citation>
    <scope>NUCLEOTIDE SEQUENCE [LARGE SCALE GENOMIC DNA]</scope>
    <source>
        <strain>GB-1</strain>
    </source>
</reference>
<gene>
    <name evidence="1" type="primary">hldE</name>
    <name type="ordered locus">PputGB1_4983</name>
</gene>
<feature type="chain" id="PRO_1000088023" description="Bifunctional protein HldE">
    <location>
        <begin position="1"/>
        <end position="473"/>
    </location>
</feature>
<feature type="region of interest" description="Ribokinase">
    <location>
        <begin position="1"/>
        <end position="318"/>
    </location>
</feature>
<feature type="region of interest" description="Cytidylyltransferase">
    <location>
        <begin position="343"/>
        <end position="473"/>
    </location>
</feature>
<feature type="active site" evidence="1">
    <location>
        <position position="263"/>
    </location>
</feature>
<feature type="binding site" evidence="1">
    <location>
        <begin position="194"/>
        <end position="197"/>
    </location>
    <ligand>
        <name>ATP</name>
        <dbReference type="ChEBI" id="CHEBI:30616"/>
    </ligand>
</feature>
<organism>
    <name type="scientific">Pseudomonas putida (strain GB-1)</name>
    <dbReference type="NCBI Taxonomy" id="76869"/>
    <lineage>
        <taxon>Bacteria</taxon>
        <taxon>Pseudomonadati</taxon>
        <taxon>Pseudomonadota</taxon>
        <taxon>Gammaproteobacteria</taxon>
        <taxon>Pseudomonadales</taxon>
        <taxon>Pseudomonadaceae</taxon>
        <taxon>Pseudomonas</taxon>
    </lineage>
</organism>
<evidence type="ECO:0000255" key="1">
    <source>
        <dbReference type="HAMAP-Rule" id="MF_01603"/>
    </source>
</evidence>
<name>HLDE_PSEPG</name>
<sequence length="473" mass="50003">MKLSMPRFDQAPVLVVGDVMLDRYWHGGTSRISPEAPVPVVKVDQIEDRPGGAANVALNIAALGAPASLIGVTGQDEAADSLANSLQAAGVRSVFQRIAHQPTIVKLRVMSRHQQLLRIDFEEPFATDPLSLATEVDSLLEGVKVLVLSDYGKGALKNHQSLIQAARAKGIPVLADPKGKDFSIYRGASLITPNLSEFETIVGRCTDEADLVAKGLQLLQDLDLGALLVTRGEHGMTLLRVGQPALHLPARAREVFDVTGAGDTVISTLAAAIAAGEDLPHAVALANLAAGIVVGKLGTAAISAPELRRAIQREEGSERGVLGLEQLLLAIDDARAHKEKIVFTNGCFDILHAGHVTYLEQARAQGDRLIVAVNDDASVSRLKGPGRPINSVDRRMAVLAGLGAVDWVISFPEGTPENLLSQVKPDVLVKGGDYGIDQVVGADIVKAYGGTVKVLGLVENSSTTAIVEKIRKN</sequence>
<accession>B0KL32</accession>
<comment type="function">
    <text evidence="1">Catalyzes the phosphorylation of D-glycero-D-manno-heptose 7-phosphate at the C-1 position to selectively form D-glycero-beta-D-manno-heptose-1,7-bisphosphate.</text>
</comment>
<comment type="function">
    <text evidence="1">Catalyzes the ADP transfer from ATP to D-glycero-beta-D-manno-heptose 1-phosphate, yielding ADP-D-glycero-beta-D-manno-heptose.</text>
</comment>
<comment type="catalytic activity">
    <reaction evidence="1">
        <text>D-glycero-beta-D-manno-heptose 7-phosphate + ATP = D-glycero-beta-D-manno-heptose 1,7-bisphosphate + ADP + H(+)</text>
        <dbReference type="Rhea" id="RHEA:27473"/>
        <dbReference type="ChEBI" id="CHEBI:15378"/>
        <dbReference type="ChEBI" id="CHEBI:30616"/>
        <dbReference type="ChEBI" id="CHEBI:60204"/>
        <dbReference type="ChEBI" id="CHEBI:60208"/>
        <dbReference type="ChEBI" id="CHEBI:456216"/>
        <dbReference type="EC" id="2.7.1.167"/>
    </reaction>
</comment>
<comment type="catalytic activity">
    <reaction evidence="1">
        <text>D-glycero-beta-D-manno-heptose 1-phosphate + ATP + H(+) = ADP-D-glycero-beta-D-manno-heptose + diphosphate</text>
        <dbReference type="Rhea" id="RHEA:27465"/>
        <dbReference type="ChEBI" id="CHEBI:15378"/>
        <dbReference type="ChEBI" id="CHEBI:30616"/>
        <dbReference type="ChEBI" id="CHEBI:33019"/>
        <dbReference type="ChEBI" id="CHEBI:59967"/>
        <dbReference type="ChEBI" id="CHEBI:61593"/>
        <dbReference type="EC" id="2.7.7.70"/>
    </reaction>
</comment>
<comment type="pathway">
    <text evidence="1">Nucleotide-sugar biosynthesis; ADP-L-glycero-beta-D-manno-heptose biosynthesis; ADP-L-glycero-beta-D-manno-heptose from D-glycero-beta-D-manno-heptose 7-phosphate: step 1/4.</text>
</comment>
<comment type="pathway">
    <text evidence="1">Nucleotide-sugar biosynthesis; ADP-L-glycero-beta-D-manno-heptose biosynthesis; ADP-L-glycero-beta-D-manno-heptose from D-glycero-beta-D-manno-heptose 7-phosphate: step 3/4.</text>
</comment>
<comment type="subunit">
    <text evidence="1">Homodimer.</text>
</comment>
<comment type="similarity">
    <text evidence="1">In the N-terminal section; belongs to the carbohydrate kinase PfkB family.</text>
</comment>
<comment type="similarity">
    <text evidence="1">In the C-terminal section; belongs to the cytidylyltransferase family.</text>
</comment>
<dbReference type="EC" id="2.7.1.167" evidence="1"/>
<dbReference type="EC" id="2.7.7.70" evidence="1"/>
<dbReference type="EMBL" id="CP000926">
    <property type="protein sequence ID" value="ABZ00868.1"/>
    <property type="molecule type" value="Genomic_DNA"/>
</dbReference>
<dbReference type="RefSeq" id="WP_012274494.1">
    <property type="nucleotide sequence ID" value="NC_010322.1"/>
</dbReference>
<dbReference type="SMR" id="B0KL32"/>
<dbReference type="KEGG" id="ppg:PputGB1_4983"/>
<dbReference type="eggNOG" id="COG0615">
    <property type="taxonomic scope" value="Bacteria"/>
</dbReference>
<dbReference type="eggNOG" id="COG2870">
    <property type="taxonomic scope" value="Bacteria"/>
</dbReference>
<dbReference type="HOGENOM" id="CLU_021150_2_1_6"/>
<dbReference type="UniPathway" id="UPA00356">
    <property type="reaction ID" value="UER00437"/>
</dbReference>
<dbReference type="UniPathway" id="UPA00356">
    <property type="reaction ID" value="UER00439"/>
</dbReference>
<dbReference type="Proteomes" id="UP000002157">
    <property type="component" value="Chromosome"/>
</dbReference>
<dbReference type="GO" id="GO:0005829">
    <property type="term" value="C:cytosol"/>
    <property type="evidence" value="ECO:0007669"/>
    <property type="project" value="TreeGrafter"/>
</dbReference>
<dbReference type="GO" id="GO:0005524">
    <property type="term" value="F:ATP binding"/>
    <property type="evidence" value="ECO:0007669"/>
    <property type="project" value="UniProtKB-UniRule"/>
</dbReference>
<dbReference type="GO" id="GO:0033785">
    <property type="term" value="F:heptose 7-phosphate kinase activity"/>
    <property type="evidence" value="ECO:0007669"/>
    <property type="project" value="UniProtKB-UniRule"/>
</dbReference>
<dbReference type="GO" id="GO:0033786">
    <property type="term" value="F:heptose-1-phosphate adenylyltransferase activity"/>
    <property type="evidence" value="ECO:0007669"/>
    <property type="project" value="UniProtKB-UniRule"/>
</dbReference>
<dbReference type="GO" id="GO:0016773">
    <property type="term" value="F:phosphotransferase activity, alcohol group as acceptor"/>
    <property type="evidence" value="ECO:0007669"/>
    <property type="project" value="InterPro"/>
</dbReference>
<dbReference type="GO" id="GO:0097171">
    <property type="term" value="P:ADP-L-glycero-beta-D-manno-heptose biosynthetic process"/>
    <property type="evidence" value="ECO:0007669"/>
    <property type="project" value="UniProtKB-UniPathway"/>
</dbReference>
<dbReference type="CDD" id="cd01172">
    <property type="entry name" value="RfaE_like"/>
    <property type="match status" value="1"/>
</dbReference>
<dbReference type="FunFam" id="3.40.1190.20:FF:000002">
    <property type="entry name" value="Bifunctional protein HldE"/>
    <property type="match status" value="1"/>
</dbReference>
<dbReference type="FunFam" id="3.40.50.620:FF:000028">
    <property type="entry name" value="Bifunctional protein HldE"/>
    <property type="match status" value="1"/>
</dbReference>
<dbReference type="Gene3D" id="3.40.1190.20">
    <property type="match status" value="1"/>
</dbReference>
<dbReference type="Gene3D" id="3.40.50.620">
    <property type="entry name" value="HUPs"/>
    <property type="match status" value="1"/>
</dbReference>
<dbReference type="HAMAP" id="MF_01603">
    <property type="entry name" value="HldE"/>
    <property type="match status" value="1"/>
</dbReference>
<dbReference type="InterPro" id="IPR023030">
    <property type="entry name" value="Bifunc_HldE"/>
</dbReference>
<dbReference type="InterPro" id="IPR002173">
    <property type="entry name" value="Carboh/pur_kinase_PfkB_CS"/>
</dbReference>
<dbReference type="InterPro" id="IPR004821">
    <property type="entry name" value="Cyt_trans-like"/>
</dbReference>
<dbReference type="InterPro" id="IPR011611">
    <property type="entry name" value="PfkB_dom"/>
</dbReference>
<dbReference type="InterPro" id="IPR011913">
    <property type="entry name" value="RfaE_dom_I"/>
</dbReference>
<dbReference type="InterPro" id="IPR011914">
    <property type="entry name" value="RfaE_dom_II"/>
</dbReference>
<dbReference type="InterPro" id="IPR029056">
    <property type="entry name" value="Ribokinase-like"/>
</dbReference>
<dbReference type="InterPro" id="IPR014729">
    <property type="entry name" value="Rossmann-like_a/b/a_fold"/>
</dbReference>
<dbReference type="NCBIfam" id="TIGR00125">
    <property type="entry name" value="cyt_tran_rel"/>
    <property type="match status" value="1"/>
</dbReference>
<dbReference type="NCBIfam" id="NF008454">
    <property type="entry name" value="PRK11316.1"/>
    <property type="match status" value="1"/>
</dbReference>
<dbReference type="NCBIfam" id="TIGR02198">
    <property type="entry name" value="rfaE_dom_I"/>
    <property type="match status" value="1"/>
</dbReference>
<dbReference type="NCBIfam" id="TIGR02199">
    <property type="entry name" value="rfaE_dom_II"/>
    <property type="match status" value="1"/>
</dbReference>
<dbReference type="PANTHER" id="PTHR46969">
    <property type="entry name" value="BIFUNCTIONAL PROTEIN HLDE"/>
    <property type="match status" value="1"/>
</dbReference>
<dbReference type="PANTHER" id="PTHR46969:SF1">
    <property type="entry name" value="BIFUNCTIONAL PROTEIN HLDE"/>
    <property type="match status" value="1"/>
</dbReference>
<dbReference type="Pfam" id="PF01467">
    <property type="entry name" value="CTP_transf_like"/>
    <property type="match status" value="1"/>
</dbReference>
<dbReference type="Pfam" id="PF00294">
    <property type="entry name" value="PfkB"/>
    <property type="match status" value="1"/>
</dbReference>
<dbReference type="SUPFAM" id="SSF52374">
    <property type="entry name" value="Nucleotidylyl transferase"/>
    <property type="match status" value="1"/>
</dbReference>
<dbReference type="SUPFAM" id="SSF53613">
    <property type="entry name" value="Ribokinase-like"/>
    <property type="match status" value="1"/>
</dbReference>
<dbReference type="PROSITE" id="PS00583">
    <property type="entry name" value="PFKB_KINASES_1"/>
    <property type="match status" value="1"/>
</dbReference>